<dbReference type="EC" id="3.5.1.96" evidence="1"/>
<dbReference type="EMBL" id="CP000950">
    <property type="protein sequence ID" value="ACA68506.1"/>
    <property type="molecule type" value="Genomic_DNA"/>
</dbReference>
<dbReference type="RefSeq" id="WP_012304137.1">
    <property type="nucleotide sequence ID" value="NZ_CP009792.1"/>
</dbReference>
<dbReference type="SMR" id="B1JMC9"/>
<dbReference type="KEGG" id="ypy:YPK_2225"/>
<dbReference type="PATRIC" id="fig|502800.11.peg.2901"/>
<dbReference type="UniPathway" id="UPA00185">
    <property type="reaction ID" value="UER00283"/>
</dbReference>
<dbReference type="GO" id="GO:0016788">
    <property type="term" value="F:hydrolase activity, acting on ester bonds"/>
    <property type="evidence" value="ECO:0007669"/>
    <property type="project" value="UniProtKB-UniRule"/>
</dbReference>
<dbReference type="GO" id="GO:0009017">
    <property type="term" value="F:succinylglutamate desuccinylase activity"/>
    <property type="evidence" value="ECO:0007669"/>
    <property type="project" value="UniProtKB-EC"/>
</dbReference>
<dbReference type="GO" id="GO:0008270">
    <property type="term" value="F:zinc ion binding"/>
    <property type="evidence" value="ECO:0007669"/>
    <property type="project" value="UniProtKB-UniRule"/>
</dbReference>
<dbReference type="GO" id="GO:0019544">
    <property type="term" value="P:arginine catabolic process to glutamate"/>
    <property type="evidence" value="ECO:0007669"/>
    <property type="project" value="UniProtKB-UniRule"/>
</dbReference>
<dbReference type="GO" id="GO:0019545">
    <property type="term" value="P:arginine catabolic process to succinate"/>
    <property type="evidence" value="ECO:0007669"/>
    <property type="project" value="UniProtKB-UniRule"/>
</dbReference>
<dbReference type="CDD" id="cd03855">
    <property type="entry name" value="M14_ASTE"/>
    <property type="match status" value="1"/>
</dbReference>
<dbReference type="FunFam" id="3.40.630.10:FF:000017">
    <property type="entry name" value="Succinylglutamate desuccinylase"/>
    <property type="match status" value="1"/>
</dbReference>
<dbReference type="Gene3D" id="3.40.630.10">
    <property type="entry name" value="Zn peptidases"/>
    <property type="match status" value="1"/>
</dbReference>
<dbReference type="HAMAP" id="MF_00767">
    <property type="entry name" value="Arg_catab_AstE"/>
    <property type="match status" value="1"/>
</dbReference>
<dbReference type="InterPro" id="IPR050178">
    <property type="entry name" value="AspA/AstE_fam"/>
</dbReference>
<dbReference type="InterPro" id="IPR055438">
    <property type="entry name" value="AstE_AspA_cat"/>
</dbReference>
<dbReference type="InterPro" id="IPR007036">
    <property type="entry name" value="Aste_AspA_hybrid_dom"/>
</dbReference>
<dbReference type="InterPro" id="IPR016681">
    <property type="entry name" value="SuccinylGlu_desuccinylase"/>
</dbReference>
<dbReference type="NCBIfam" id="TIGR03242">
    <property type="entry name" value="arg_catab_astE"/>
    <property type="match status" value="1"/>
</dbReference>
<dbReference type="NCBIfam" id="NF003706">
    <property type="entry name" value="PRK05324.1"/>
    <property type="match status" value="1"/>
</dbReference>
<dbReference type="PANTHER" id="PTHR15162">
    <property type="entry name" value="ASPARTOACYLASE"/>
    <property type="match status" value="1"/>
</dbReference>
<dbReference type="PANTHER" id="PTHR15162:SF7">
    <property type="entry name" value="SUCCINYLGLUTAMATE DESUCCINYLASE"/>
    <property type="match status" value="1"/>
</dbReference>
<dbReference type="Pfam" id="PF24827">
    <property type="entry name" value="AstE_AspA_cat"/>
    <property type="match status" value="1"/>
</dbReference>
<dbReference type="Pfam" id="PF04952">
    <property type="entry name" value="AstE_AspA_hybrid"/>
    <property type="match status" value="1"/>
</dbReference>
<dbReference type="PIRSF" id="PIRSF017020">
    <property type="entry name" value="AstE"/>
    <property type="match status" value="1"/>
</dbReference>
<dbReference type="SUPFAM" id="SSF53187">
    <property type="entry name" value="Zn-dependent exopeptidases"/>
    <property type="match status" value="1"/>
</dbReference>
<organism>
    <name type="scientific">Yersinia pseudotuberculosis serotype O:3 (strain YPIII)</name>
    <dbReference type="NCBI Taxonomy" id="502800"/>
    <lineage>
        <taxon>Bacteria</taxon>
        <taxon>Pseudomonadati</taxon>
        <taxon>Pseudomonadota</taxon>
        <taxon>Gammaproteobacteria</taxon>
        <taxon>Enterobacterales</taxon>
        <taxon>Yersiniaceae</taxon>
        <taxon>Yersinia</taxon>
    </lineage>
</organism>
<comment type="function">
    <text evidence="1">Transforms N(2)-succinylglutamate into succinate and glutamate.</text>
</comment>
<comment type="catalytic activity">
    <reaction evidence="1">
        <text>N-succinyl-L-glutamate + H2O = L-glutamate + succinate</text>
        <dbReference type="Rhea" id="RHEA:15169"/>
        <dbReference type="ChEBI" id="CHEBI:15377"/>
        <dbReference type="ChEBI" id="CHEBI:29985"/>
        <dbReference type="ChEBI" id="CHEBI:30031"/>
        <dbReference type="ChEBI" id="CHEBI:58763"/>
        <dbReference type="EC" id="3.5.1.96"/>
    </reaction>
</comment>
<comment type="cofactor">
    <cofactor evidence="1">
        <name>Zn(2+)</name>
        <dbReference type="ChEBI" id="CHEBI:29105"/>
    </cofactor>
    <text evidence="1">Binds 1 zinc ion per subunit.</text>
</comment>
<comment type="pathway">
    <text evidence="1">Amino-acid degradation; L-arginine degradation via AST pathway; L-glutamate and succinate from L-arginine: step 5/5.</text>
</comment>
<comment type="similarity">
    <text evidence="1">Belongs to the AspA/AstE family. Succinylglutamate desuccinylase subfamily.</text>
</comment>
<sequence length="330" mass="37214">MLDFLAITLSGKPPQVIQGETVNLKWQWLGEGILTLVPHRSYTQSVVISAGIHGNETAPIEILNQLVTDLLAGQLTLAVRLLVLLGNPPAIRKGKRYLSNDINRMFGGRYQHYTPSDETRRASTLEQRVMAFFQASHTSERLHYDLHTAIRGSYHPRFGLLPYQQTPYSAAMFRWLRDIELDALVMHTSAGGTFAHFSSERCQAASCTLELGKALPFGENQLSQFSAITQGLRSLVSDSALPARKTENMKYYRVVKSLLRQHPDFKLRGAEDTVNFTRFAQGTLLTEQPNDNYRVEHPYEWILFPNPHVALGLRAGMMLVKMCESELPIT</sequence>
<proteinExistence type="inferred from homology"/>
<reference key="1">
    <citation type="submission" date="2008-02" db="EMBL/GenBank/DDBJ databases">
        <title>Complete sequence of Yersinia pseudotuberculosis YPIII.</title>
        <authorList>
            <consortium name="US DOE Joint Genome Institute"/>
            <person name="Copeland A."/>
            <person name="Lucas S."/>
            <person name="Lapidus A."/>
            <person name="Glavina del Rio T."/>
            <person name="Dalin E."/>
            <person name="Tice H."/>
            <person name="Bruce D."/>
            <person name="Goodwin L."/>
            <person name="Pitluck S."/>
            <person name="Munk A.C."/>
            <person name="Brettin T."/>
            <person name="Detter J.C."/>
            <person name="Han C."/>
            <person name="Tapia R."/>
            <person name="Schmutz J."/>
            <person name="Larimer F."/>
            <person name="Land M."/>
            <person name="Hauser L."/>
            <person name="Challacombe J.F."/>
            <person name="Green L."/>
            <person name="Lindler L.E."/>
            <person name="Nikolich M.P."/>
            <person name="Richardson P."/>
        </authorList>
    </citation>
    <scope>NUCLEOTIDE SEQUENCE [LARGE SCALE GENOMIC DNA]</scope>
    <source>
        <strain>YPIII</strain>
    </source>
</reference>
<name>ASTE_YERPY</name>
<gene>
    <name evidence="1" type="primary">astE</name>
    <name type="ordered locus">YPK_2225</name>
</gene>
<keyword id="KW-0056">Arginine metabolism</keyword>
<keyword id="KW-0378">Hydrolase</keyword>
<keyword id="KW-0479">Metal-binding</keyword>
<keyword id="KW-0862">Zinc</keyword>
<protein>
    <recommendedName>
        <fullName evidence="1">Succinylglutamate desuccinylase</fullName>
        <ecNumber evidence="1">3.5.1.96</ecNumber>
    </recommendedName>
</protein>
<evidence type="ECO:0000255" key="1">
    <source>
        <dbReference type="HAMAP-Rule" id="MF_00767"/>
    </source>
</evidence>
<accession>B1JMC9</accession>
<feature type="chain" id="PRO_1000133651" description="Succinylglutamate desuccinylase">
    <location>
        <begin position="1"/>
        <end position="330"/>
    </location>
</feature>
<feature type="active site" evidence="1">
    <location>
        <position position="210"/>
    </location>
</feature>
<feature type="binding site" evidence="1">
    <location>
        <position position="53"/>
    </location>
    <ligand>
        <name>Zn(2+)</name>
        <dbReference type="ChEBI" id="CHEBI:29105"/>
    </ligand>
</feature>
<feature type="binding site" evidence="1">
    <location>
        <position position="56"/>
    </location>
    <ligand>
        <name>Zn(2+)</name>
        <dbReference type="ChEBI" id="CHEBI:29105"/>
    </ligand>
</feature>
<feature type="binding site" evidence="1">
    <location>
        <position position="147"/>
    </location>
    <ligand>
        <name>Zn(2+)</name>
        <dbReference type="ChEBI" id="CHEBI:29105"/>
    </ligand>
</feature>